<reference key="1">
    <citation type="journal article" date="2005" name="PLoS Biol.">
        <title>The genome sequence of Rickettsia felis identifies the first putative conjugative plasmid in an obligate intracellular parasite.</title>
        <authorList>
            <person name="Ogata H."/>
            <person name="Renesto P."/>
            <person name="Audic S."/>
            <person name="Robert C."/>
            <person name="Blanc G."/>
            <person name="Fournier P.-E."/>
            <person name="Parinello H."/>
            <person name="Claverie J.-M."/>
            <person name="Raoult D."/>
        </authorList>
    </citation>
    <scope>NUCLEOTIDE SEQUENCE [LARGE SCALE GENOMIC DNA]</scope>
    <source>
        <strain>ATCC VR-1525 / URRWXCal2</strain>
    </source>
</reference>
<keyword id="KW-0963">Cytoplasm</keyword>
<keyword id="KW-0275">Fatty acid biosynthesis</keyword>
<keyword id="KW-0276">Fatty acid metabolism</keyword>
<keyword id="KW-0444">Lipid biosynthesis</keyword>
<keyword id="KW-0443">Lipid metabolism</keyword>
<keyword id="KW-0596">Phosphopantetheine</keyword>
<keyword id="KW-0597">Phosphoprotein</keyword>
<evidence type="ECO:0000255" key="1">
    <source>
        <dbReference type="HAMAP-Rule" id="MF_01217"/>
    </source>
</evidence>
<evidence type="ECO:0000255" key="2">
    <source>
        <dbReference type="PROSITE-ProRule" id="PRU00258"/>
    </source>
</evidence>
<gene>
    <name evidence="1" type="primary">acpP</name>
    <name type="ordered locus">RF_1223</name>
</gene>
<organism>
    <name type="scientific">Rickettsia felis (strain ATCC VR-1525 / URRWXCal2)</name>
    <name type="common">Rickettsia azadi</name>
    <dbReference type="NCBI Taxonomy" id="315456"/>
    <lineage>
        <taxon>Bacteria</taxon>
        <taxon>Pseudomonadati</taxon>
        <taxon>Pseudomonadota</taxon>
        <taxon>Alphaproteobacteria</taxon>
        <taxon>Rickettsiales</taxon>
        <taxon>Rickettsiaceae</taxon>
        <taxon>Rickettsieae</taxon>
        <taxon>Rickettsia</taxon>
        <taxon>spotted fever group</taxon>
    </lineage>
</organism>
<sequence>MEFKIMSTTDKIEQKVIEMVAEKLNKDKSIITTDSRFIEDLKADSLDTVELMMAIEVEYGIDIPDDEATKIKTVSDVIKYIKERQS</sequence>
<comment type="function">
    <text evidence="1">Carrier of the growing fatty acid chain in fatty acid biosynthesis.</text>
</comment>
<comment type="pathway">
    <text evidence="1">Lipid metabolism; fatty acid biosynthesis.</text>
</comment>
<comment type="subcellular location">
    <subcellularLocation>
        <location evidence="1">Cytoplasm</location>
    </subcellularLocation>
</comment>
<comment type="PTM">
    <text evidence="1">4'-phosphopantetheine is transferred from CoA to a specific serine of apo-ACP by AcpS. This modification is essential for activity because fatty acids are bound in thioester linkage to the sulfhydryl of the prosthetic group.</text>
</comment>
<comment type="similarity">
    <text evidence="1">Belongs to the acyl carrier protein (ACP) family.</text>
</comment>
<feature type="chain" id="PRO_0000272411" description="Acyl carrier protein">
    <location>
        <begin position="1"/>
        <end position="86"/>
    </location>
</feature>
<feature type="domain" description="Carrier" evidence="2">
    <location>
        <begin position="10"/>
        <end position="85"/>
    </location>
</feature>
<feature type="modified residue" description="O-(pantetheine 4'-phosphoryl)serine" evidence="2">
    <location>
        <position position="45"/>
    </location>
</feature>
<protein>
    <recommendedName>
        <fullName evidence="1">Acyl carrier protein</fullName>
        <shortName evidence="1">ACP</shortName>
    </recommendedName>
</protein>
<name>ACP_RICFE</name>
<proteinExistence type="inferred from homology"/>
<accession>Q4UK61</accession>
<dbReference type="EMBL" id="CP000053">
    <property type="protein sequence ID" value="AAY62074.1"/>
    <property type="molecule type" value="Genomic_DNA"/>
</dbReference>
<dbReference type="BMRB" id="Q4UK61"/>
<dbReference type="SMR" id="Q4UK61"/>
<dbReference type="STRING" id="315456.RF_1223"/>
<dbReference type="KEGG" id="rfe:RF_1223"/>
<dbReference type="eggNOG" id="COG0236">
    <property type="taxonomic scope" value="Bacteria"/>
</dbReference>
<dbReference type="HOGENOM" id="CLU_108696_5_6_5"/>
<dbReference type="UniPathway" id="UPA00094"/>
<dbReference type="Proteomes" id="UP000008548">
    <property type="component" value="Chromosome"/>
</dbReference>
<dbReference type="GO" id="GO:0005829">
    <property type="term" value="C:cytosol"/>
    <property type="evidence" value="ECO:0007669"/>
    <property type="project" value="TreeGrafter"/>
</dbReference>
<dbReference type="GO" id="GO:0016020">
    <property type="term" value="C:membrane"/>
    <property type="evidence" value="ECO:0007669"/>
    <property type="project" value="GOC"/>
</dbReference>
<dbReference type="GO" id="GO:0000035">
    <property type="term" value="F:acyl binding"/>
    <property type="evidence" value="ECO:0007669"/>
    <property type="project" value="TreeGrafter"/>
</dbReference>
<dbReference type="GO" id="GO:0000036">
    <property type="term" value="F:acyl carrier activity"/>
    <property type="evidence" value="ECO:0007669"/>
    <property type="project" value="UniProtKB-UniRule"/>
</dbReference>
<dbReference type="GO" id="GO:0009245">
    <property type="term" value="P:lipid A biosynthetic process"/>
    <property type="evidence" value="ECO:0007669"/>
    <property type="project" value="TreeGrafter"/>
</dbReference>
<dbReference type="Gene3D" id="1.10.1200.10">
    <property type="entry name" value="ACP-like"/>
    <property type="match status" value="1"/>
</dbReference>
<dbReference type="HAMAP" id="MF_01217">
    <property type="entry name" value="Acyl_carrier"/>
    <property type="match status" value="1"/>
</dbReference>
<dbReference type="InterPro" id="IPR003231">
    <property type="entry name" value="ACP"/>
</dbReference>
<dbReference type="InterPro" id="IPR036736">
    <property type="entry name" value="ACP-like_sf"/>
</dbReference>
<dbReference type="InterPro" id="IPR009081">
    <property type="entry name" value="PP-bd_ACP"/>
</dbReference>
<dbReference type="NCBIfam" id="TIGR00517">
    <property type="entry name" value="acyl_carrier"/>
    <property type="match status" value="1"/>
</dbReference>
<dbReference type="NCBIfam" id="NF002148">
    <property type="entry name" value="PRK00982.1-2"/>
    <property type="match status" value="1"/>
</dbReference>
<dbReference type="NCBIfam" id="NF002150">
    <property type="entry name" value="PRK00982.1-4"/>
    <property type="match status" value="1"/>
</dbReference>
<dbReference type="PANTHER" id="PTHR20863">
    <property type="entry name" value="ACYL CARRIER PROTEIN"/>
    <property type="match status" value="1"/>
</dbReference>
<dbReference type="PANTHER" id="PTHR20863:SF76">
    <property type="entry name" value="CARRIER DOMAIN-CONTAINING PROTEIN"/>
    <property type="match status" value="1"/>
</dbReference>
<dbReference type="Pfam" id="PF00550">
    <property type="entry name" value="PP-binding"/>
    <property type="match status" value="1"/>
</dbReference>
<dbReference type="SUPFAM" id="SSF47336">
    <property type="entry name" value="ACP-like"/>
    <property type="match status" value="1"/>
</dbReference>
<dbReference type="PROSITE" id="PS50075">
    <property type="entry name" value="CARRIER"/>
    <property type="match status" value="1"/>
</dbReference>